<name>RNH2_METCA</name>
<protein>
    <recommendedName>
        <fullName evidence="1">Ribonuclease HII</fullName>
        <shortName evidence="1">RNase HII</shortName>
        <ecNumber evidence="1">3.1.26.4</ecNumber>
    </recommendedName>
</protein>
<dbReference type="EC" id="3.1.26.4" evidence="1"/>
<dbReference type="EMBL" id="AE017282">
    <property type="protein sequence ID" value="AAU91448.1"/>
    <property type="molecule type" value="Genomic_DNA"/>
</dbReference>
<dbReference type="RefSeq" id="WP_010961668.1">
    <property type="nucleotide sequence ID" value="NC_002977.6"/>
</dbReference>
<dbReference type="SMR" id="Q604U3"/>
<dbReference type="STRING" id="243233.MCA2443"/>
<dbReference type="GeneID" id="88224644"/>
<dbReference type="KEGG" id="mca:MCA2443"/>
<dbReference type="eggNOG" id="COG0164">
    <property type="taxonomic scope" value="Bacteria"/>
</dbReference>
<dbReference type="HOGENOM" id="CLU_036532_3_2_6"/>
<dbReference type="Proteomes" id="UP000006821">
    <property type="component" value="Chromosome"/>
</dbReference>
<dbReference type="GO" id="GO:0005737">
    <property type="term" value="C:cytoplasm"/>
    <property type="evidence" value="ECO:0007669"/>
    <property type="project" value="UniProtKB-SubCell"/>
</dbReference>
<dbReference type="GO" id="GO:0032299">
    <property type="term" value="C:ribonuclease H2 complex"/>
    <property type="evidence" value="ECO:0007669"/>
    <property type="project" value="TreeGrafter"/>
</dbReference>
<dbReference type="GO" id="GO:0030145">
    <property type="term" value="F:manganese ion binding"/>
    <property type="evidence" value="ECO:0007669"/>
    <property type="project" value="UniProtKB-UniRule"/>
</dbReference>
<dbReference type="GO" id="GO:0003723">
    <property type="term" value="F:RNA binding"/>
    <property type="evidence" value="ECO:0007669"/>
    <property type="project" value="InterPro"/>
</dbReference>
<dbReference type="GO" id="GO:0004523">
    <property type="term" value="F:RNA-DNA hybrid ribonuclease activity"/>
    <property type="evidence" value="ECO:0007669"/>
    <property type="project" value="UniProtKB-UniRule"/>
</dbReference>
<dbReference type="GO" id="GO:0043137">
    <property type="term" value="P:DNA replication, removal of RNA primer"/>
    <property type="evidence" value="ECO:0007669"/>
    <property type="project" value="TreeGrafter"/>
</dbReference>
<dbReference type="GO" id="GO:0006298">
    <property type="term" value="P:mismatch repair"/>
    <property type="evidence" value="ECO:0007669"/>
    <property type="project" value="TreeGrafter"/>
</dbReference>
<dbReference type="CDD" id="cd07182">
    <property type="entry name" value="RNase_HII_bacteria_HII_like"/>
    <property type="match status" value="1"/>
</dbReference>
<dbReference type="Gene3D" id="3.30.420.10">
    <property type="entry name" value="Ribonuclease H-like superfamily/Ribonuclease H"/>
    <property type="match status" value="1"/>
</dbReference>
<dbReference type="HAMAP" id="MF_00052_B">
    <property type="entry name" value="RNase_HII_B"/>
    <property type="match status" value="1"/>
</dbReference>
<dbReference type="InterPro" id="IPR022898">
    <property type="entry name" value="RNase_HII"/>
</dbReference>
<dbReference type="InterPro" id="IPR001352">
    <property type="entry name" value="RNase_HII/HIII"/>
</dbReference>
<dbReference type="InterPro" id="IPR024567">
    <property type="entry name" value="RNase_HII/HIII_dom"/>
</dbReference>
<dbReference type="InterPro" id="IPR012337">
    <property type="entry name" value="RNaseH-like_sf"/>
</dbReference>
<dbReference type="InterPro" id="IPR036397">
    <property type="entry name" value="RNaseH_sf"/>
</dbReference>
<dbReference type="NCBIfam" id="NF000595">
    <property type="entry name" value="PRK00015.1-3"/>
    <property type="match status" value="1"/>
</dbReference>
<dbReference type="PANTHER" id="PTHR10954">
    <property type="entry name" value="RIBONUCLEASE H2 SUBUNIT A"/>
    <property type="match status" value="1"/>
</dbReference>
<dbReference type="PANTHER" id="PTHR10954:SF18">
    <property type="entry name" value="RIBONUCLEASE HII"/>
    <property type="match status" value="1"/>
</dbReference>
<dbReference type="Pfam" id="PF01351">
    <property type="entry name" value="RNase_HII"/>
    <property type="match status" value="1"/>
</dbReference>
<dbReference type="SUPFAM" id="SSF53098">
    <property type="entry name" value="Ribonuclease H-like"/>
    <property type="match status" value="1"/>
</dbReference>
<dbReference type="PROSITE" id="PS51975">
    <property type="entry name" value="RNASE_H_2"/>
    <property type="match status" value="1"/>
</dbReference>
<sequence>MASLVAGIDEVGRGCIAGPVIAAAVIFAPGQDTHGLADSKRLRPDRRLVLAGRICSESLAWAVGRAEVSEIDQLNILRATHLAMCRAVAALPVLPDWVRVDGNRYPPLDCPGEAIVGGDASVAEIAAASILAKVFRDREMEVLDRLCPGYALGVHKGYPTRLHIDRLASRGASFFHRRSFAPVRAVIDRSSAS</sequence>
<gene>
    <name evidence="1" type="primary">rnhB</name>
    <name type="ordered locus">MCA2443</name>
</gene>
<comment type="function">
    <text evidence="1">Endonuclease that specifically degrades the RNA of RNA-DNA hybrids.</text>
</comment>
<comment type="catalytic activity">
    <reaction evidence="1">
        <text>Endonucleolytic cleavage to 5'-phosphomonoester.</text>
        <dbReference type="EC" id="3.1.26.4"/>
    </reaction>
</comment>
<comment type="cofactor">
    <cofactor evidence="1">
        <name>Mn(2+)</name>
        <dbReference type="ChEBI" id="CHEBI:29035"/>
    </cofactor>
    <cofactor evidence="1">
        <name>Mg(2+)</name>
        <dbReference type="ChEBI" id="CHEBI:18420"/>
    </cofactor>
    <text evidence="1">Manganese or magnesium. Binds 1 divalent metal ion per monomer in the absence of substrate. May bind a second metal ion after substrate binding.</text>
</comment>
<comment type="subcellular location">
    <subcellularLocation>
        <location evidence="1">Cytoplasm</location>
    </subcellularLocation>
</comment>
<comment type="similarity">
    <text evidence="1">Belongs to the RNase HII family.</text>
</comment>
<reference key="1">
    <citation type="journal article" date="2004" name="PLoS Biol.">
        <title>Genomic insights into methanotrophy: the complete genome sequence of Methylococcus capsulatus (Bath).</title>
        <authorList>
            <person name="Ward N.L."/>
            <person name="Larsen O."/>
            <person name="Sakwa J."/>
            <person name="Bruseth L."/>
            <person name="Khouri H.M."/>
            <person name="Durkin A.S."/>
            <person name="Dimitrov G."/>
            <person name="Jiang L."/>
            <person name="Scanlan D."/>
            <person name="Kang K.H."/>
            <person name="Lewis M.R."/>
            <person name="Nelson K.E."/>
            <person name="Methe B.A."/>
            <person name="Wu M."/>
            <person name="Heidelberg J.F."/>
            <person name="Paulsen I.T."/>
            <person name="Fouts D.E."/>
            <person name="Ravel J."/>
            <person name="Tettelin H."/>
            <person name="Ren Q."/>
            <person name="Read T.D."/>
            <person name="DeBoy R.T."/>
            <person name="Seshadri R."/>
            <person name="Salzberg S.L."/>
            <person name="Jensen H.B."/>
            <person name="Birkeland N.K."/>
            <person name="Nelson W.C."/>
            <person name="Dodson R.J."/>
            <person name="Grindhaug S.H."/>
            <person name="Holt I.E."/>
            <person name="Eidhammer I."/>
            <person name="Jonasen I."/>
            <person name="Vanaken S."/>
            <person name="Utterback T.R."/>
            <person name="Feldblyum T.V."/>
            <person name="Fraser C.M."/>
            <person name="Lillehaug J.R."/>
            <person name="Eisen J.A."/>
        </authorList>
    </citation>
    <scope>NUCLEOTIDE SEQUENCE [LARGE SCALE GENOMIC DNA]</scope>
    <source>
        <strain>ATCC 33009 / NCIMB 11132 / Bath</strain>
    </source>
</reference>
<proteinExistence type="inferred from homology"/>
<feature type="chain" id="PRO_0000235735" description="Ribonuclease HII">
    <location>
        <begin position="1"/>
        <end position="193"/>
    </location>
</feature>
<feature type="domain" description="RNase H type-2" evidence="2">
    <location>
        <begin position="3"/>
        <end position="192"/>
    </location>
</feature>
<feature type="binding site" evidence="1">
    <location>
        <position position="9"/>
    </location>
    <ligand>
        <name>a divalent metal cation</name>
        <dbReference type="ChEBI" id="CHEBI:60240"/>
    </ligand>
</feature>
<feature type="binding site" evidence="1">
    <location>
        <position position="10"/>
    </location>
    <ligand>
        <name>a divalent metal cation</name>
        <dbReference type="ChEBI" id="CHEBI:60240"/>
    </ligand>
</feature>
<feature type="binding site" evidence="1">
    <location>
        <position position="101"/>
    </location>
    <ligand>
        <name>a divalent metal cation</name>
        <dbReference type="ChEBI" id="CHEBI:60240"/>
    </ligand>
</feature>
<evidence type="ECO:0000255" key="1">
    <source>
        <dbReference type="HAMAP-Rule" id="MF_00052"/>
    </source>
</evidence>
<evidence type="ECO:0000255" key="2">
    <source>
        <dbReference type="PROSITE-ProRule" id="PRU01319"/>
    </source>
</evidence>
<organism>
    <name type="scientific">Methylococcus capsulatus (strain ATCC 33009 / NCIMB 11132 / Bath)</name>
    <dbReference type="NCBI Taxonomy" id="243233"/>
    <lineage>
        <taxon>Bacteria</taxon>
        <taxon>Pseudomonadati</taxon>
        <taxon>Pseudomonadota</taxon>
        <taxon>Gammaproteobacteria</taxon>
        <taxon>Methylococcales</taxon>
        <taxon>Methylococcaceae</taxon>
        <taxon>Methylococcus</taxon>
    </lineage>
</organism>
<keyword id="KW-0963">Cytoplasm</keyword>
<keyword id="KW-0255">Endonuclease</keyword>
<keyword id="KW-0378">Hydrolase</keyword>
<keyword id="KW-0464">Manganese</keyword>
<keyword id="KW-0479">Metal-binding</keyword>
<keyword id="KW-0540">Nuclease</keyword>
<keyword id="KW-1185">Reference proteome</keyword>
<accession>Q604U3</accession>